<dbReference type="EC" id="2.7.11.33" evidence="1"/>
<dbReference type="EC" id="2.7.4.28" evidence="1"/>
<dbReference type="EMBL" id="CP001164">
    <property type="protein sequence ID" value="ACI39060.1"/>
    <property type="molecule type" value="Genomic_DNA"/>
</dbReference>
<dbReference type="RefSeq" id="WP_000368046.1">
    <property type="nucleotide sequence ID" value="NC_011353.1"/>
</dbReference>
<dbReference type="SMR" id="B5YPZ1"/>
<dbReference type="GeneID" id="93775866"/>
<dbReference type="KEGG" id="ecf:ECH74115_2421"/>
<dbReference type="HOGENOM" id="CLU_046206_1_0_6"/>
<dbReference type="GO" id="GO:0043531">
    <property type="term" value="F:ADP binding"/>
    <property type="evidence" value="ECO:0007669"/>
    <property type="project" value="UniProtKB-UniRule"/>
</dbReference>
<dbReference type="GO" id="GO:0005524">
    <property type="term" value="F:ATP binding"/>
    <property type="evidence" value="ECO:0007669"/>
    <property type="project" value="InterPro"/>
</dbReference>
<dbReference type="GO" id="GO:0016776">
    <property type="term" value="F:phosphotransferase activity, phosphate group as acceptor"/>
    <property type="evidence" value="ECO:0007669"/>
    <property type="project" value="UniProtKB-UniRule"/>
</dbReference>
<dbReference type="GO" id="GO:0004674">
    <property type="term" value="F:protein serine/threonine kinase activity"/>
    <property type="evidence" value="ECO:0007669"/>
    <property type="project" value="UniProtKB-UniRule"/>
</dbReference>
<dbReference type="HAMAP" id="MF_01062">
    <property type="entry name" value="PSRP"/>
    <property type="match status" value="1"/>
</dbReference>
<dbReference type="InterPro" id="IPR005177">
    <property type="entry name" value="Kinase-pyrophosphorylase"/>
</dbReference>
<dbReference type="InterPro" id="IPR026530">
    <property type="entry name" value="PSRP"/>
</dbReference>
<dbReference type="NCBIfam" id="NF003742">
    <property type="entry name" value="PRK05339.1"/>
    <property type="match status" value="1"/>
</dbReference>
<dbReference type="PANTHER" id="PTHR31756">
    <property type="entry name" value="PYRUVATE, PHOSPHATE DIKINASE REGULATORY PROTEIN 1, CHLOROPLASTIC"/>
    <property type="match status" value="1"/>
</dbReference>
<dbReference type="PANTHER" id="PTHR31756:SF3">
    <property type="entry name" value="PYRUVATE, PHOSPHATE DIKINASE REGULATORY PROTEIN 1, CHLOROPLASTIC"/>
    <property type="match status" value="1"/>
</dbReference>
<dbReference type="Pfam" id="PF03618">
    <property type="entry name" value="Kinase-PPPase"/>
    <property type="match status" value="1"/>
</dbReference>
<accession>B5YPZ1</accession>
<keyword id="KW-0418">Kinase</keyword>
<keyword id="KW-0547">Nucleotide-binding</keyword>
<keyword id="KW-0723">Serine/threonine-protein kinase</keyword>
<keyword id="KW-0808">Transferase</keyword>
<comment type="function">
    <text evidence="1">Bifunctional serine/threonine kinase and phosphorylase involved in the regulation of the phosphoenolpyruvate synthase (PEPS) by catalyzing its phosphorylation/dephosphorylation.</text>
</comment>
<comment type="catalytic activity">
    <reaction evidence="1">
        <text>[pyruvate, water dikinase] + ADP = [pyruvate, water dikinase]-phosphate + AMP + H(+)</text>
        <dbReference type="Rhea" id="RHEA:46020"/>
        <dbReference type="Rhea" id="RHEA-COMP:11425"/>
        <dbReference type="Rhea" id="RHEA-COMP:11426"/>
        <dbReference type="ChEBI" id="CHEBI:15378"/>
        <dbReference type="ChEBI" id="CHEBI:43176"/>
        <dbReference type="ChEBI" id="CHEBI:68546"/>
        <dbReference type="ChEBI" id="CHEBI:456215"/>
        <dbReference type="ChEBI" id="CHEBI:456216"/>
        <dbReference type="EC" id="2.7.11.33"/>
    </reaction>
</comment>
<comment type="catalytic activity">
    <reaction evidence="1">
        <text>[pyruvate, water dikinase]-phosphate + phosphate + H(+) = [pyruvate, water dikinase] + diphosphate</text>
        <dbReference type="Rhea" id="RHEA:48580"/>
        <dbReference type="Rhea" id="RHEA-COMP:11425"/>
        <dbReference type="Rhea" id="RHEA-COMP:11426"/>
        <dbReference type="ChEBI" id="CHEBI:15378"/>
        <dbReference type="ChEBI" id="CHEBI:33019"/>
        <dbReference type="ChEBI" id="CHEBI:43176"/>
        <dbReference type="ChEBI" id="CHEBI:43474"/>
        <dbReference type="ChEBI" id="CHEBI:68546"/>
        <dbReference type="EC" id="2.7.4.28"/>
    </reaction>
</comment>
<comment type="similarity">
    <text evidence="1">Belongs to the pyruvate, phosphate/water dikinase regulatory protein family. PSRP subfamily.</text>
</comment>
<gene>
    <name evidence="1" type="primary">ppsR</name>
    <name type="ordered locus">ECH74115_2421</name>
</gene>
<proteinExistence type="inferred from homology"/>
<feature type="chain" id="PRO_1000136467" description="Phosphoenolpyruvate synthase regulatory protein">
    <location>
        <begin position="1"/>
        <end position="277"/>
    </location>
</feature>
<feature type="binding site" evidence="1">
    <location>
        <begin position="157"/>
        <end position="164"/>
    </location>
    <ligand>
        <name>ADP</name>
        <dbReference type="ChEBI" id="CHEBI:456216"/>
    </ligand>
</feature>
<sequence length="277" mass="31211">MDNAVDRHVFYISDGTAITAEVLGHAVMSQFPVTISSITLPFVENESRARAVKDQIDAIYHQTGVRPLVFYSIVLPEIRAIILQSEGFCQDIVQALVAPLQQEMKLDPTPIAHRTHGLNPNNLNKYDARIAAIDYTLAHDDGISLRNLDQAQVILLGVSRCGKTPTSLYLAMQFGIRAANYPFIADDMDNLVLPASLKPLQHKLFGLTIDPERLAAIREERRENSRYASLRQCRMEVAEVEALYRKNQIPWINSTNYSVEEIATKILDIMGLSRRMY</sequence>
<protein>
    <recommendedName>
        <fullName evidence="1">Phosphoenolpyruvate synthase regulatory protein</fullName>
        <shortName evidence="1">PEP synthase regulatory protein</shortName>
        <shortName evidence="1">PSRP</shortName>
        <ecNumber evidence="1">2.7.11.33</ecNumber>
        <ecNumber evidence="1">2.7.4.28</ecNumber>
    </recommendedName>
    <alternativeName>
        <fullName evidence="1">Pyruvate, water dikinase regulatory protein</fullName>
    </alternativeName>
</protein>
<evidence type="ECO:0000255" key="1">
    <source>
        <dbReference type="HAMAP-Rule" id="MF_01062"/>
    </source>
</evidence>
<name>PSRP_ECO5E</name>
<reference key="1">
    <citation type="journal article" date="2011" name="Proc. Natl. Acad. Sci. U.S.A.">
        <title>Genomic anatomy of Escherichia coli O157:H7 outbreaks.</title>
        <authorList>
            <person name="Eppinger M."/>
            <person name="Mammel M.K."/>
            <person name="Leclerc J.E."/>
            <person name="Ravel J."/>
            <person name="Cebula T.A."/>
        </authorList>
    </citation>
    <scope>NUCLEOTIDE SEQUENCE [LARGE SCALE GENOMIC DNA]</scope>
    <source>
        <strain>EC4115 / EHEC</strain>
    </source>
</reference>
<organism>
    <name type="scientific">Escherichia coli O157:H7 (strain EC4115 / EHEC)</name>
    <dbReference type="NCBI Taxonomy" id="444450"/>
    <lineage>
        <taxon>Bacteria</taxon>
        <taxon>Pseudomonadati</taxon>
        <taxon>Pseudomonadota</taxon>
        <taxon>Gammaproteobacteria</taxon>
        <taxon>Enterobacterales</taxon>
        <taxon>Enterobacteriaceae</taxon>
        <taxon>Escherichia</taxon>
    </lineage>
</organism>